<name>CTPG_MYCBO</name>
<keyword id="KW-0067">ATP-binding</keyword>
<keyword id="KW-1003">Cell membrane</keyword>
<keyword id="KW-0460">Magnesium</keyword>
<keyword id="KW-0472">Membrane</keyword>
<keyword id="KW-0479">Metal-binding</keyword>
<keyword id="KW-0547">Nucleotide-binding</keyword>
<keyword id="KW-0597">Phosphoprotein</keyword>
<keyword id="KW-1185">Reference proteome</keyword>
<keyword id="KW-1278">Translocase</keyword>
<keyword id="KW-0812">Transmembrane</keyword>
<keyword id="KW-1133">Transmembrane helix</keyword>
<evidence type="ECO:0000250" key="1"/>
<evidence type="ECO:0000255" key="2"/>
<evidence type="ECO:0000255" key="3">
    <source>
        <dbReference type="PROSITE-ProRule" id="PRU00280"/>
    </source>
</evidence>
<evidence type="ECO:0000256" key="4">
    <source>
        <dbReference type="SAM" id="MobiDB-lite"/>
    </source>
</evidence>
<evidence type="ECO:0000305" key="5"/>
<comment type="catalytic activity">
    <reaction>
        <text>ATP + H2O = ADP + phosphate + H(+)</text>
        <dbReference type="Rhea" id="RHEA:13065"/>
        <dbReference type="ChEBI" id="CHEBI:15377"/>
        <dbReference type="ChEBI" id="CHEBI:15378"/>
        <dbReference type="ChEBI" id="CHEBI:30616"/>
        <dbReference type="ChEBI" id="CHEBI:43474"/>
        <dbReference type="ChEBI" id="CHEBI:456216"/>
    </reaction>
</comment>
<comment type="subcellular location">
    <subcellularLocation>
        <location>Cell membrane</location>
        <topology>Multi-pass membrane protein</topology>
    </subcellularLocation>
</comment>
<comment type="similarity">
    <text evidence="5">Belongs to the cation transport ATPase (P-type) (TC 3.A.3) family. Type IB subfamily.</text>
</comment>
<feature type="chain" id="PRO_0000046344" description="Probable cation-transporting ATPase G">
    <location>
        <begin position="1"/>
        <end position="771"/>
    </location>
</feature>
<feature type="transmembrane region" description="Helical" evidence="2">
    <location>
        <begin position="72"/>
        <end position="92"/>
    </location>
</feature>
<feature type="transmembrane region" description="Helical" evidence="2">
    <location>
        <begin position="163"/>
        <end position="183"/>
    </location>
</feature>
<feature type="transmembrane region" description="Helical" evidence="2">
    <location>
        <begin position="209"/>
        <end position="229"/>
    </location>
</feature>
<feature type="transmembrane region" description="Helical" evidence="2">
    <location>
        <begin position="330"/>
        <end position="350"/>
    </location>
</feature>
<feature type="transmembrane region" description="Helical" evidence="2">
    <location>
        <begin position="387"/>
        <end position="407"/>
    </location>
</feature>
<feature type="transmembrane region" description="Helical" evidence="2">
    <location>
        <begin position="411"/>
        <end position="431"/>
    </location>
</feature>
<feature type="transmembrane region" description="Helical" evidence="2">
    <location>
        <begin position="657"/>
        <end position="677"/>
    </location>
</feature>
<feature type="transmembrane region" description="Helical" evidence="2">
    <location>
        <begin position="716"/>
        <end position="736"/>
    </location>
</feature>
<feature type="domain" description="HMA" evidence="3">
    <location>
        <begin position="19"/>
        <end position="86"/>
    </location>
</feature>
<feature type="region of interest" description="Disordered" evidence="4">
    <location>
        <begin position="122"/>
        <end position="143"/>
    </location>
</feature>
<feature type="active site" description="4-aspartylphosphate intermediate" evidence="1">
    <location>
        <position position="462"/>
    </location>
</feature>
<feature type="binding site" evidence="1">
    <location>
        <position position="651"/>
    </location>
    <ligand>
        <name>Mg(2+)</name>
        <dbReference type="ChEBI" id="CHEBI:18420"/>
    </ligand>
</feature>
<feature type="binding site" evidence="1">
    <location>
        <position position="655"/>
    </location>
    <ligand>
        <name>Mg(2+)</name>
        <dbReference type="ChEBI" id="CHEBI:18420"/>
    </ligand>
</feature>
<accession>P63690</accession>
<accession>A0A1R3XZZ2</accession>
<accession>Q10866</accession>
<accession>X2BJ77</accession>
<proteinExistence type="inferred from homology"/>
<reference key="1">
    <citation type="journal article" date="2003" name="Proc. Natl. Acad. Sci. U.S.A.">
        <title>The complete genome sequence of Mycobacterium bovis.</title>
        <authorList>
            <person name="Garnier T."/>
            <person name="Eiglmeier K."/>
            <person name="Camus J.-C."/>
            <person name="Medina N."/>
            <person name="Mansoor H."/>
            <person name="Pryor M."/>
            <person name="Duthoy S."/>
            <person name="Grondin S."/>
            <person name="Lacroix C."/>
            <person name="Monsempe C."/>
            <person name="Simon S."/>
            <person name="Harris B."/>
            <person name="Atkin R."/>
            <person name="Doggett J."/>
            <person name="Mayes R."/>
            <person name="Keating L."/>
            <person name="Wheeler P.R."/>
            <person name="Parkhill J."/>
            <person name="Barrell B.G."/>
            <person name="Cole S.T."/>
            <person name="Gordon S.V."/>
            <person name="Hewinson R.G."/>
        </authorList>
    </citation>
    <scope>NUCLEOTIDE SEQUENCE [LARGE SCALE GENOMIC DNA]</scope>
    <source>
        <strain>ATCC BAA-935 / AF2122/97</strain>
    </source>
</reference>
<reference key="2">
    <citation type="journal article" date="2017" name="Genome Announc.">
        <title>Updated reference genome sequence and annotation of Mycobacterium bovis AF2122/97.</title>
        <authorList>
            <person name="Malone K.M."/>
            <person name="Farrell D."/>
            <person name="Stuber T.P."/>
            <person name="Schubert O.T."/>
            <person name="Aebersold R."/>
            <person name="Robbe-Austerman S."/>
            <person name="Gordon S.V."/>
        </authorList>
    </citation>
    <scope>NUCLEOTIDE SEQUENCE [LARGE SCALE GENOMIC DNA]</scope>
    <scope>GENOME REANNOTATION</scope>
    <source>
        <strain>ATCC BAA-935 / AF2122/97</strain>
    </source>
</reference>
<gene>
    <name type="primary">ctpG</name>
    <name type="ordered locus">BQ2027_MB2015C</name>
</gene>
<protein>
    <recommendedName>
        <fullName>Probable cation-transporting ATPase G</fullName>
        <ecNumber>7.2.2.-</ecNumber>
    </recommendedName>
</protein>
<organism>
    <name type="scientific">Mycobacterium bovis (strain ATCC BAA-935 / AF2122/97)</name>
    <dbReference type="NCBI Taxonomy" id="233413"/>
    <lineage>
        <taxon>Bacteria</taxon>
        <taxon>Bacillati</taxon>
        <taxon>Actinomycetota</taxon>
        <taxon>Actinomycetes</taxon>
        <taxon>Mycobacteriales</taxon>
        <taxon>Mycobacteriaceae</taxon>
        <taxon>Mycobacterium</taxon>
        <taxon>Mycobacterium tuberculosis complex</taxon>
    </lineage>
</organism>
<sequence length="771" mass="79309">MTTVVDAEVQLTVVSDAAGRMRVQATGFQFDAGRAVAIEDTVGKVAGVQAVHAYPRTASIVIWYSRAICDTAAILSAIIDAETVPAAAVPAYASRSASNRKAGVVQKIIDWSTRTLSGVRRDVAAQPSGETSDACCDGEDNEDREPEQLWQVAKLRRAAFSGVLLTASLVAAWAYPLWPVVLGLKALALAVGASTFVPSSLKRLAEGRVGVGTLMTIAALGAVALGELGEAATLAFLFSISEGLEEYATARTRRGLRALLSLVPDQATVLREGTETIVASTELHVGDQMIVKPGERLATDGIIRAGRTALDVSAITGESVPVEVGPGDEVFAGSINGLGVLQVGVTATAANNSLARIVHIVEAEQVRKGASQRLADCIARPLVPSIMIAAALIAGTGSVLGNPLVWIERALVVLVAAAPCALAIAVPVTVVASIGAASRLGVLIKGGAALETLGTIRAVALDKTGTLTANRPVVIDVATTNGATREEVLAVAAALEARSEHPLAVAVLAATQATTAASDVQAVPGAGLIGRLDGRVVRLGRPGWLDAAELADHVACMQQAGATAVLVERDQQLLGAIAVRDELRPEAAEVVAGLRTGGYQVTMLTGDNHATAAALAAQAGIEQVHAELRPEDKAHLVAQLRARQPTAMVGDGVNDAPALAAADLGIAMGAMGTDVAIETADVALMGQDLRHLPQALDHARRSRQIMVQNVGLSLSIITVLMPLALFGILGLAAVVLVHEFTEVIVIANGVRAGRIKPLAGPPKTPDRTIPG</sequence>
<dbReference type="EC" id="7.2.2.-"/>
<dbReference type="EMBL" id="LT708304">
    <property type="protein sequence ID" value="SIU00622.1"/>
    <property type="molecule type" value="Genomic_DNA"/>
</dbReference>
<dbReference type="RefSeq" id="NP_855665.1">
    <property type="nucleotide sequence ID" value="NC_002945.3"/>
</dbReference>
<dbReference type="RefSeq" id="WP_003899120.1">
    <property type="nucleotide sequence ID" value="NC_002945.4"/>
</dbReference>
<dbReference type="SMR" id="P63690"/>
<dbReference type="KEGG" id="mbo:BQ2027_MB2015C"/>
<dbReference type="PATRIC" id="fig|233413.5.peg.2214"/>
<dbReference type="Proteomes" id="UP000001419">
    <property type="component" value="Chromosome"/>
</dbReference>
<dbReference type="GO" id="GO:0005886">
    <property type="term" value="C:plasma membrane"/>
    <property type="evidence" value="ECO:0007669"/>
    <property type="project" value="UniProtKB-SubCell"/>
</dbReference>
<dbReference type="GO" id="GO:0005524">
    <property type="term" value="F:ATP binding"/>
    <property type="evidence" value="ECO:0007669"/>
    <property type="project" value="UniProtKB-KW"/>
</dbReference>
<dbReference type="GO" id="GO:0016887">
    <property type="term" value="F:ATP hydrolysis activity"/>
    <property type="evidence" value="ECO:0007669"/>
    <property type="project" value="InterPro"/>
</dbReference>
<dbReference type="GO" id="GO:0019829">
    <property type="term" value="F:ATPase-coupled monoatomic cation transmembrane transporter activity"/>
    <property type="evidence" value="ECO:0007669"/>
    <property type="project" value="InterPro"/>
</dbReference>
<dbReference type="GO" id="GO:0015086">
    <property type="term" value="F:cadmium ion transmembrane transporter activity"/>
    <property type="evidence" value="ECO:0007669"/>
    <property type="project" value="TreeGrafter"/>
</dbReference>
<dbReference type="GO" id="GO:0046872">
    <property type="term" value="F:metal ion binding"/>
    <property type="evidence" value="ECO:0007669"/>
    <property type="project" value="UniProtKB-KW"/>
</dbReference>
<dbReference type="CDD" id="cd02079">
    <property type="entry name" value="P-type_ATPase_HM"/>
    <property type="match status" value="1"/>
</dbReference>
<dbReference type="FunFam" id="2.70.150.10:FF:000097">
    <property type="entry name" value="Cation transporter ATPase G"/>
    <property type="match status" value="1"/>
</dbReference>
<dbReference type="Gene3D" id="3.40.1110.10">
    <property type="entry name" value="Calcium-transporting ATPase, cytoplasmic domain N"/>
    <property type="match status" value="1"/>
</dbReference>
<dbReference type="Gene3D" id="2.70.150.10">
    <property type="entry name" value="Calcium-transporting ATPase, cytoplasmic transduction domain A"/>
    <property type="match status" value="1"/>
</dbReference>
<dbReference type="Gene3D" id="3.40.50.1000">
    <property type="entry name" value="HAD superfamily/HAD-like"/>
    <property type="match status" value="1"/>
</dbReference>
<dbReference type="InterPro" id="IPR023299">
    <property type="entry name" value="ATPase_P-typ_cyto_dom_N"/>
</dbReference>
<dbReference type="InterPro" id="IPR018303">
    <property type="entry name" value="ATPase_P-typ_P_site"/>
</dbReference>
<dbReference type="InterPro" id="IPR023298">
    <property type="entry name" value="ATPase_P-typ_TM_dom_sf"/>
</dbReference>
<dbReference type="InterPro" id="IPR008250">
    <property type="entry name" value="ATPase_P-typ_transduc_dom_A_sf"/>
</dbReference>
<dbReference type="InterPro" id="IPR051014">
    <property type="entry name" value="Cation_Transport_ATPase_IB"/>
</dbReference>
<dbReference type="InterPro" id="IPR036412">
    <property type="entry name" value="HAD-like_sf"/>
</dbReference>
<dbReference type="InterPro" id="IPR023214">
    <property type="entry name" value="HAD_sf"/>
</dbReference>
<dbReference type="InterPro" id="IPR006121">
    <property type="entry name" value="HMA_dom"/>
</dbReference>
<dbReference type="InterPro" id="IPR027256">
    <property type="entry name" value="P-typ_ATPase_IB"/>
</dbReference>
<dbReference type="InterPro" id="IPR001757">
    <property type="entry name" value="P_typ_ATPase"/>
</dbReference>
<dbReference type="InterPro" id="IPR044492">
    <property type="entry name" value="P_typ_ATPase_HD_dom"/>
</dbReference>
<dbReference type="NCBIfam" id="TIGR01512">
    <property type="entry name" value="ATPase-IB2_Cd"/>
    <property type="match status" value="1"/>
</dbReference>
<dbReference type="NCBIfam" id="TIGR01525">
    <property type="entry name" value="ATPase-IB_hvy"/>
    <property type="match status" value="1"/>
</dbReference>
<dbReference type="NCBIfam" id="TIGR01494">
    <property type="entry name" value="ATPase_P-type"/>
    <property type="match status" value="1"/>
</dbReference>
<dbReference type="PANTHER" id="PTHR48085">
    <property type="entry name" value="CADMIUM/ZINC-TRANSPORTING ATPASE HMA2-RELATED"/>
    <property type="match status" value="1"/>
</dbReference>
<dbReference type="PANTHER" id="PTHR48085:SF5">
    <property type="entry name" value="CADMIUM_ZINC-TRANSPORTING ATPASE HMA4-RELATED"/>
    <property type="match status" value="1"/>
</dbReference>
<dbReference type="Pfam" id="PF00122">
    <property type="entry name" value="E1-E2_ATPase"/>
    <property type="match status" value="1"/>
</dbReference>
<dbReference type="Pfam" id="PF00702">
    <property type="entry name" value="Hydrolase"/>
    <property type="match status" value="1"/>
</dbReference>
<dbReference type="PRINTS" id="PR00119">
    <property type="entry name" value="CATATPASE"/>
</dbReference>
<dbReference type="SFLD" id="SFLDS00003">
    <property type="entry name" value="Haloacid_Dehalogenase"/>
    <property type="match status" value="1"/>
</dbReference>
<dbReference type="SFLD" id="SFLDF00027">
    <property type="entry name" value="p-type_atpase"/>
    <property type="match status" value="1"/>
</dbReference>
<dbReference type="SUPFAM" id="SSF81653">
    <property type="entry name" value="Calcium ATPase, transduction domain A"/>
    <property type="match status" value="1"/>
</dbReference>
<dbReference type="SUPFAM" id="SSF81665">
    <property type="entry name" value="Calcium ATPase, transmembrane domain M"/>
    <property type="match status" value="1"/>
</dbReference>
<dbReference type="SUPFAM" id="SSF56784">
    <property type="entry name" value="HAD-like"/>
    <property type="match status" value="1"/>
</dbReference>
<dbReference type="PROSITE" id="PS00154">
    <property type="entry name" value="ATPASE_E1_E2"/>
    <property type="match status" value="1"/>
</dbReference>
<dbReference type="PROSITE" id="PS50846">
    <property type="entry name" value="HMA_2"/>
    <property type="match status" value="1"/>
</dbReference>